<protein>
    <recommendedName>
        <fullName>Stage II sporulation protein E</fullName>
        <ecNumber>3.1.3.16</ecNumber>
    </recommendedName>
</protein>
<evidence type="ECO:0000250" key="1"/>
<evidence type="ECO:0000255" key="2"/>
<evidence type="ECO:0000255" key="3">
    <source>
        <dbReference type="PROSITE-ProRule" id="PRU01082"/>
    </source>
</evidence>
<name>SP2E_PRIMG</name>
<organism>
    <name type="scientific">Priestia megaterium</name>
    <name type="common">Bacillus megaterium</name>
    <dbReference type="NCBI Taxonomy" id="1404"/>
    <lineage>
        <taxon>Bacteria</taxon>
        <taxon>Bacillati</taxon>
        <taxon>Bacillota</taxon>
        <taxon>Bacilli</taxon>
        <taxon>Bacillales</taxon>
        <taxon>Bacillaceae</taxon>
        <taxon>Priestia</taxon>
    </lineage>
</organism>
<sequence length="585" mass="65690">TVGVVTGLILSFANVSSLYEMSLLAFSGLLGGLLKDGKKLGARLGLVVGSLLIGLYAQADQGLTTNLYESLTAVVLFLLTPSFVLKNLSKLVPGTSENMLEQQQYVRKIRDVTANRVEQFSNVFQALSKSFTQNGFYDEKPSADKEVDYFLSSVTERTCQFCFKKEQCWAQQFDTTYEYMKEIMLEVDNGTLEQNPRLIREMDKHCVKSKKVIDVIEHELTYFKANQHLKAQIQESRRIVAEQLHGVSEVMGNFAKEIKRERENLNVQEEQILEALRNFGMEINQIEIYSLEPGNVDIEMWVPYCHGRGECEKIIAPMLTDILGESIVVKNEECAKYPQGYCHVSFGCTKAYVVDTGVAHAAKGGGFVSGDSYSMIELNAGKYALAISDGMGNGERAHYESSETLQLLKQILQTGIEETIAIKSINSILSLRTNDEIFSTLDLAMIDLQDANVNFLKIGSTPSFIKRGDKVIKIQASNLPMGIIEEFEVDVVNEQMKAEDLLIMMSDGVFEGPKHVENYEMWMKRKIGELQTNDPQEIADLIMEEVIRTKVGLIEDDMTVVVAKLQHNTPKWSSIPSYAYRNLAQ</sequence>
<dbReference type="EC" id="3.1.3.16"/>
<dbReference type="EMBL" id="U26836">
    <property type="protein sequence ID" value="AAB58072.1"/>
    <property type="molecule type" value="Genomic_DNA"/>
</dbReference>
<dbReference type="PIR" id="S71018">
    <property type="entry name" value="S71018"/>
</dbReference>
<dbReference type="PIR" id="S73325">
    <property type="entry name" value="S73325"/>
</dbReference>
<dbReference type="SMR" id="P49600"/>
<dbReference type="GO" id="GO:0005886">
    <property type="term" value="C:plasma membrane"/>
    <property type="evidence" value="ECO:0007669"/>
    <property type="project" value="UniProtKB-SubCell"/>
</dbReference>
<dbReference type="GO" id="GO:0004722">
    <property type="term" value="F:protein serine/threonine phosphatase activity"/>
    <property type="evidence" value="ECO:0007669"/>
    <property type="project" value="UniProtKB-EC"/>
</dbReference>
<dbReference type="GO" id="GO:0030435">
    <property type="term" value="P:sporulation resulting in formation of a cellular spore"/>
    <property type="evidence" value="ECO:0007669"/>
    <property type="project" value="UniProtKB-KW"/>
</dbReference>
<dbReference type="FunFam" id="3.60.40.10:FF:000100">
    <property type="entry name" value="Stage II sporulation protein E"/>
    <property type="match status" value="1"/>
</dbReference>
<dbReference type="Gene3D" id="3.60.40.10">
    <property type="entry name" value="PPM-type phosphatase domain"/>
    <property type="match status" value="1"/>
</dbReference>
<dbReference type="InterPro" id="IPR052016">
    <property type="entry name" value="Bact_Sigma-Reg"/>
</dbReference>
<dbReference type="InterPro" id="IPR036457">
    <property type="entry name" value="PPM-type-like_dom_sf"/>
</dbReference>
<dbReference type="InterPro" id="IPR001932">
    <property type="entry name" value="PPM-type_phosphatase-like_dom"/>
</dbReference>
<dbReference type="InterPro" id="IPR014221">
    <property type="entry name" value="SpoII_E"/>
</dbReference>
<dbReference type="InterPro" id="IPR045768">
    <property type="entry name" value="SpoIIE_N"/>
</dbReference>
<dbReference type="NCBIfam" id="TIGR02865">
    <property type="entry name" value="spore_II_E"/>
    <property type="match status" value="1"/>
</dbReference>
<dbReference type="PANTHER" id="PTHR43156:SF2">
    <property type="entry name" value="STAGE II SPORULATION PROTEIN E"/>
    <property type="match status" value="1"/>
</dbReference>
<dbReference type="PANTHER" id="PTHR43156">
    <property type="entry name" value="STAGE II SPORULATION PROTEIN E-RELATED"/>
    <property type="match status" value="1"/>
</dbReference>
<dbReference type="Pfam" id="PF07228">
    <property type="entry name" value="SpoIIE"/>
    <property type="match status" value="1"/>
</dbReference>
<dbReference type="Pfam" id="PF19732">
    <property type="entry name" value="SpoIIE_N"/>
    <property type="match status" value="1"/>
</dbReference>
<dbReference type="SMART" id="SM00331">
    <property type="entry name" value="PP2C_SIG"/>
    <property type="match status" value="1"/>
</dbReference>
<dbReference type="SMART" id="SM00332">
    <property type="entry name" value="PP2Cc"/>
    <property type="match status" value="1"/>
</dbReference>
<dbReference type="SUPFAM" id="SSF81606">
    <property type="entry name" value="PP2C-like"/>
    <property type="match status" value="1"/>
</dbReference>
<dbReference type="PROSITE" id="PS51746">
    <property type="entry name" value="PPM_2"/>
    <property type="match status" value="1"/>
</dbReference>
<accession>P49600</accession>
<comment type="function">
    <text evidence="1">Normally needed for pro-sigma E processing during sporulation but can be bypassed in vegetative cells. Activates SpoIIAA by dephosphorylation (By similarity).</text>
</comment>
<comment type="catalytic activity">
    <reaction>
        <text>O-phospho-L-seryl-[protein] + H2O = L-seryl-[protein] + phosphate</text>
        <dbReference type="Rhea" id="RHEA:20629"/>
        <dbReference type="Rhea" id="RHEA-COMP:9863"/>
        <dbReference type="Rhea" id="RHEA-COMP:11604"/>
        <dbReference type="ChEBI" id="CHEBI:15377"/>
        <dbReference type="ChEBI" id="CHEBI:29999"/>
        <dbReference type="ChEBI" id="CHEBI:43474"/>
        <dbReference type="ChEBI" id="CHEBI:83421"/>
        <dbReference type="EC" id="3.1.3.16"/>
    </reaction>
</comment>
<comment type="catalytic activity">
    <reaction>
        <text>O-phospho-L-threonyl-[protein] + H2O = L-threonyl-[protein] + phosphate</text>
        <dbReference type="Rhea" id="RHEA:47004"/>
        <dbReference type="Rhea" id="RHEA-COMP:11060"/>
        <dbReference type="Rhea" id="RHEA-COMP:11605"/>
        <dbReference type="ChEBI" id="CHEBI:15377"/>
        <dbReference type="ChEBI" id="CHEBI:30013"/>
        <dbReference type="ChEBI" id="CHEBI:43474"/>
        <dbReference type="ChEBI" id="CHEBI:61977"/>
        <dbReference type="EC" id="3.1.3.16"/>
    </reaction>
</comment>
<comment type="subcellular location">
    <subcellularLocation>
        <location evidence="1">Cell membrane</location>
        <topology evidence="1">Multi-pass membrane protein</topology>
    </subcellularLocation>
    <text evidence="1">Polar septum.</text>
</comment>
<keyword id="KW-1003">Cell membrane</keyword>
<keyword id="KW-0378">Hydrolase</keyword>
<keyword id="KW-0472">Membrane</keyword>
<keyword id="KW-0904">Protein phosphatase</keyword>
<keyword id="KW-0749">Sporulation</keyword>
<keyword id="KW-0812">Transmembrane</keyword>
<keyword id="KW-1133">Transmembrane helix</keyword>
<reference key="1">
    <citation type="journal article" date="1996" name="Mol. Microbiol.">
        <title>Structure and function of the Bacillus SpoIIE protein and its localization to sites of sporulation septum assembly.</title>
        <authorList>
            <person name="Barak I."/>
            <person name="Behari J."/>
            <person name="Olmedo G."/>
            <person name="Guzman P."/>
            <person name="Brown D.P."/>
            <person name="Castro E."/>
            <person name="Walker D."/>
            <person name="Westpheling J."/>
            <person name="Youngman P."/>
        </authorList>
    </citation>
    <scope>NUCLEOTIDE SEQUENCE [GENOMIC DNA]</scope>
    <source>
        <strain>ATCC 35985 / VT1660</strain>
    </source>
</reference>
<feature type="chain" id="PRO_0000057793" description="Stage II sporulation protein E">
    <location>
        <begin position="1" status="less than"/>
        <end position="585"/>
    </location>
</feature>
<feature type="transmembrane region" description="Helical" evidence="2">
    <location>
        <begin position="40"/>
        <end position="57"/>
    </location>
</feature>
<feature type="transmembrane region" description="Helical" evidence="2">
    <location>
        <begin position="70"/>
        <end position="86"/>
    </location>
</feature>
<feature type="domain" description="PPM-type phosphatase" evidence="3">
    <location>
        <begin position="355"/>
        <end position="565"/>
    </location>
</feature>
<feature type="non-terminal residue">
    <location>
        <position position="1"/>
    </location>
</feature>
<proteinExistence type="inferred from homology"/>
<gene>
    <name type="primary">spoIIE</name>
</gene>